<gene>
    <name evidence="1" type="primary">mqo</name>
    <name type="ordered locus">KRH_10160</name>
</gene>
<organism>
    <name type="scientific">Kocuria rhizophila (strain ATCC 9341 / DSM 348 / NBRC 103217 / DC2201)</name>
    <dbReference type="NCBI Taxonomy" id="378753"/>
    <lineage>
        <taxon>Bacteria</taxon>
        <taxon>Bacillati</taxon>
        <taxon>Actinomycetota</taxon>
        <taxon>Actinomycetes</taxon>
        <taxon>Micrococcales</taxon>
        <taxon>Micrococcaceae</taxon>
        <taxon>Kocuria</taxon>
    </lineage>
</organism>
<protein>
    <recommendedName>
        <fullName evidence="1">Probable malate:quinone oxidoreductase</fullName>
        <ecNumber evidence="1">1.1.5.4</ecNumber>
    </recommendedName>
    <alternativeName>
        <fullName evidence="1">MQO</fullName>
    </alternativeName>
    <alternativeName>
        <fullName evidence="1">Malate dehydrogenase [quinone]</fullName>
    </alternativeName>
</protein>
<sequence>MTSPQPTETADVVLVGAGIMSATLATLLNDLQPEWRMLVLERLDAAGLESSNAWNNAGTGHSALCELNYAPQAADGTVSAEKALTINEQFQVTRQMWSSLVENGTLEDPNTFINPVPHVSMVFGDDHADYLRARYDAFKPNKLFERMEFTEDRDLIAQWAPLTMHGRGAGRVAATFAPEGTDVDFGALTNQLLNHLQGRNITVEYGQEVTTLDRQSDGSWLVSVVDRLNSDNNRVIRAGFVFLGAGGGALPLLQKSKIKEAKGYGGFPVSGLFLRNTDPTVTAQHNAKVYGQASVGAPPMSVPHLDTRYVNGRRAIMFGPYGGFKPNFLKHGSLLDLPKSVRAHNLYPMTRAGMANLDLVKYLVGELTKTRSQRIDALHEYYPTAEESQWELIEAGQRVQVMKSDPQKGGVLQFGTELVTSADGSIGALLGASPGASTAVPIMLNLLSKCFPAKMSEWEPRIKELIPAYGRKLNDDPRLTDEIMGHTASVLGIK</sequence>
<dbReference type="EC" id="1.1.5.4" evidence="1"/>
<dbReference type="EMBL" id="AP009152">
    <property type="protein sequence ID" value="BAG29363.1"/>
    <property type="molecule type" value="Genomic_DNA"/>
</dbReference>
<dbReference type="RefSeq" id="WP_012398084.1">
    <property type="nucleotide sequence ID" value="NC_010617.1"/>
</dbReference>
<dbReference type="SMR" id="B2GFJ0"/>
<dbReference type="STRING" id="378753.KRH_10160"/>
<dbReference type="KEGG" id="krh:KRH_10160"/>
<dbReference type="eggNOG" id="COG0579">
    <property type="taxonomic scope" value="Bacteria"/>
</dbReference>
<dbReference type="HOGENOM" id="CLU_028151_0_0_11"/>
<dbReference type="OrthoDB" id="9763983at2"/>
<dbReference type="UniPathway" id="UPA00223">
    <property type="reaction ID" value="UER01008"/>
</dbReference>
<dbReference type="Proteomes" id="UP000008838">
    <property type="component" value="Chromosome"/>
</dbReference>
<dbReference type="GO" id="GO:0047545">
    <property type="term" value="F:2-hydroxyglutarate dehydrogenase activity"/>
    <property type="evidence" value="ECO:0007669"/>
    <property type="project" value="TreeGrafter"/>
</dbReference>
<dbReference type="GO" id="GO:0008924">
    <property type="term" value="F:L-malate dehydrogenase (quinone) activity"/>
    <property type="evidence" value="ECO:0007669"/>
    <property type="project" value="UniProtKB-UniRule"/>
</dbReference>
<dbReference type="GO" id="GO:0006099">
    <property type="term" value="P:tricarboxylic acid cycle"/>
    <property type="evidence" value="ECO:0007669"/>
    <property type="project" value="UniProtKB-UniRule"/>
</dbReference>
<dbReference type="Gene3D" id="3.30.9.10">
    <property type="entry name" value="D-Amino Acid Oxidase, subunit A, domain 2"/>
    <property type="match status" value="1"/>
</dbReference>
<dbReference type="Gene3D" id="3.50.50.60">
    <property type="entry name" value="FAD/NAD(P)-binding domain"/>
    <property type="match status" value="1"/>
</dbReference>
<dbReference type="HAMAP" id="MF_00212">
    <property type="entry name" value="MQO"/>
    <property type="match status" value="1"/>
</dbReference>
<dbReference type="InterPro" id="IPR036188">
    <property type="entry name" value="FAD/NAD-bd_sf"/>
</dbReference>
<dbReference type="InterPro" id="IPR006231">
    <property type="entry name" value="MQO"/>
</dbReference>
<dbReference type="NCBIfam" id="TIGR01320">
    <property type="entry name" value="mal_quin_oxido"/>
    <property type="match status" value="1"/>
</dbReference>
<dbReference type="NCBIfam" id="NF003603">
    <property type="entry name" value="PRK05257.1-1"/>
    <property type="match status" value="1"/>
</dbReference>
<dbReference type="NCBIfam" id="NF003605">
    <property type="entry name" value="PRK05257.1-4"/>
    <property type="match status" value="1"/>
</dbReference>
<dbReference type="NCBIfam" id="NF003606">
    <property type="entry name" value="PRK05257.2-1"/>
    <property type="match status" value="1"/>
</dbReference>
<dbReference type="NCBIfam" id="NF003609">
    <property type="entry name" value="PRK05257.2-5"/>
    <property type="match status" value="1"/>
</dbReference>
<dbReference type="NCBIfam" id="NF003610">
    <property type="entry name" value="PRK05257.3-1"/>
    <property type="match status" value="1"/>
</dbReference>
<dbReference type="NCBIfam" id="NF003611">
    <property type="entry name" value="PRK05257.3-2"/>
    <property type="match status" value="1"/>
</dbReference>
<dbReference type="NCBIfam" id="NF009875">
    <property type="entry name" value="PRK13339.1"/>
    <property type="match status" value="1"/>
</dbReference>
<dbReference type="PANTHER" id="PTHR43104">
    <property type="entry name" value="L-2-HYDROXYGLUTARATE DEHYDROGENASE, MITOCHONDRIAL"/>
    <property type="match status" value="1"/>
</dbReference>
<dbReference type="PANTHER" id="PTHR43104:SF2">
    <property type="entry name" value="L-2-HYDROXYGLUTARATE DEHYDROGENASE, MITOCHONDRIAL"/>
    <property type="match status" value="1"/>
</dbReference>
<dbReference type="Pfam" id="PF06039">
    <property type="entry name" value="Mqo"/>
    <property type="match status" value="1"/>
</dbReference>
<dbReference type="SUPFAM" id="SSF51905">
    <property type="entry name" value="FAD/NAD(P)-binding domain"/>
    <property type="match status" value="1"/>
</dbReference>
<feature type="chain" id="PRO_1000099874" description="Probable malate:quinone oxidoreductase">
    <location>
        <begin position="1"/>
        <end position="494"/>
    </location>
</feature>
<comment type="catalytic activity">
    <reaction evidence="1">
        <text>(S)-malate + a quinone = a quinol + oxaloacetate</text>
        <dbReference type="Rhea" id="RHEA:46012"/>
        <dbReference type="ChEBI" id="CHEBI:15589"/>
        <dbReference type="ChEBI" id="CHEBI:16452"/>
        <dbReference type="ChEBI" id="CHEBI:24646"/>
        <dbReference type="ChEBI" id="CHEBI:132124"/>
        <dbReference type="EC" id="1.1.5.4"/>
    </reaction>
</comment>
<comment type="cofactor">
    <cofactor evidence="1">
        <name>FAD</name>
        <dbReference type="ChEBI" id="CHEBI:57692"/>
    </cofactor>
</comment>
<comment type="pathway">
    <text evidence="1">Carbohydrate metabolism; tricarboxylic acid cycle; oxaloacetate from (S)-malate (quinone route): step 1/1.</text>
</comment>
<comment type="similarity">
    <text evidence="1">Belongs to the MQO family.</text>
</comment>
<proteinExistence type="inferred from homology"/>
<name>MQO_KOCRD</name>
<reference key="1">
    <citation type="journal article" date="2008" name="J. Bacteriol.">
        <title>Complete genome sequence of the soil actinomycete Kocuria rhizophila.</title>
        <authorList>
            <person name="Takarada H."/>
            <person name="Sekine M."/>
            <person name="Kosugi H."/>
            <person name="Matsuo Y."/>
            <person name="Fujisawa T."/>
            <person name="Omata S."/>
            <person name="Kishi E."/>
            <person name="Shimizu A."/>
            <person name="Tsukatani N."/>
            <person name="Tanikawa S."/>
            <person name="Fujita N."/>
            <person name="Harayama S."/>
        </authorList>
    </citation>
    <scope>NUCLEOTIDE SEQUENCE [LARGE SCALE GENOMIC DNA]</scope>
    <source>
        <strain>ATCC 9341 / DSM 348 / NBRC 103217 / DC2201</strain>
    </source>
</reference>
<accession>B2GFJ0</accession>
<keyword id="KW-0274">FAD</keyword>
<keyword id="KW-0285">Flavoprotein</keyword>
<keyword id="KW-0560">Oxidoreductase</keyword>
<keyword id="KW-1185">Reference proteome</keyword>
<keyword id="KW-0816">Tricarboxylic acid cycle</keyword>
<evidence type="ECO:0000255" key="1">
    <source>
        <dbReference type="HAMAP-Rule" id="MF_00212"/>
    </source>
</evidence>